<keyword id="KW-0106">Calcium</keyword>
<keyword id="KW-0165">Cleavage on pair of basic residues</keyword>
<keyword id="KW-0963">Cytoplasm</keyword>
<keyword id="KW-0372">Hormone</keyword>
<keyword id="KW-0539">Nucleus</keyword>
<keyword id="KW-1185">Reference proteome</keyword>
<keyword id="KW-0964">Secreted</keyword>
<keyword id="KW-0732">Signal</keyword>
<evidence type="ECO:0000250" key="1">
    <source>
        <dbReference type="UniProtKB" id="P12272"/>
    </source>
</evidence>
<evidence type="ECO:0000250" key="2">
    <source>
        <dbReference type="UniProtKB" id="P22858"/>
    </source>
</evidence>
<evidence type="ECO:0000255" key="3"/>
<evidence type="ECO:0000256" key="4">
    <source>
        <dbReference type="SAM" id="MobiDB-lite"/>
    </source>
</evidence>
<evidence type="ECO:0000305" key="5"/>
<organism>
    <name type="scientific">Ovis aries</name>
    <name type="common">Sheep</name>
    <dbReference type="NCBI Taxonomy" id="9940"/>
    <lineage>
        <taxon>Eukaryota</taxon>
        <taxon>Metazoa</taxon>
        <taxon>Chordata</taxon>
        <taxon>Craniata</taxon>
        <taxon>Vertebrata</taxon>
        <taxon>Euteleostomi</taxon>
        <taxon>Mammalia</taxon>
        <taxon>Eutheria</taxon>
        <taxon>Laurasiatheria</taxon>
        <taxon>Artiodactyla</taxon>
        <taxon>Ruminantia</taxon>
        <taxon>Pecora</taxon>
        <taxon>Bovidae</taxon>
        <taxon>Caprinae</taxon>
        <taxon>Ovis</taxon>
    </lineage>
</organism>
<comment type="function">
    <text evidence="1 2">Neuroendocrine peptide which is a critical regulator of cellular and organ growth, development, migration, differentiation and survival and of epithelial calcium ion transport (By similarity). Acts by binding to its receptor, PTH1R, activating G protein-coupled receptor signaling (By similarity). Regulates endochondral bone development and epithelial-mesenchymal interactions during the formation of the mammary glands and teeth (By similarity). Required for skeletal homeostasis. Promotes mammary mesenchyme differentiation and bud outgrowth by modulating mesenchymal cell responsiveness to BMPs (By similarity). Up-regulates BMPR1A expression in the mammary mesenchyme and this increases the sensitivity of these cells to BMPs and allows them to respond to BMP4 in a paracrine and/or autocrine fashion. BMP4 signaling in the mesenchyme, in turn, triggers epithelial outgrowth and augments MSX2 expression, which causes the mammary mesenchyme to inhibit hair follicle formation within the nipple sheath (By similarity).</text>
</comment>
<comment type="subunit">
    <text evidence="1">PTHrP interacts with PTH1R (via N-terminal extracellular domain).</text>
</comment>
<comment type="subcellular location">
    <subcellularLocation>
        <location evidence="1">Secreted</location>
    </subcellularLocation>
    <subcellularLocation>
        <location evidence="1">Cytoplasm</location>
    </subcellularLocation>
    <subcellularLocation>
        <location evidence="1">Nucleus</location>
    </subcellularLocation>
</comment>
<comment type="similarity">
    <text evidence="5">Belongs to the parathyroid hormone family.</text>
</comment>
<gene>
    <name type="primary">PTHLH</name>
</gene>
<feature type="signal peptide" evidence="3">
    <location>
        <begin position="1" status="less than"/>
        <end position="14"/>
    </location>
</feature>
<feature type="propeptide" id="PRO_0000023238" evidence="1">
    <location>
        <begin position="15"/>
        <end position="24"/>
    </location>
</feature>
<feature type="chain" id="PRO_0000023239" description="Parathyroid hormone-related protein">
    <location>
        <begin position="27"/>
        <end position="121" status="greater than"/>
    </location>
</feature>
<feature type="region of interest" description="Important for receptor binding" evidence="1">
    <location>
        <begin position="47"/>
        <end position="58"/>
    </location>
</feature>
<feature type="region of interest" description="Disordered" evidence="4">
    <location>
        <begin position="61"/>
        <end position="121"/>
    </location>
</feature>
<feature type="short sequence motif" description="Nuclear localization signal" evidence="1">
    <location>
        <begin position="98"/>
        <end position="119"/>
    </location>
</feature>
<feature type="compositionally biased region" description="Polar residues" evidence="4">
    <location>
        <begin position="66"/>
        <end position="80"/>
    </location>
</feature>
<feature type="compositionally biased region" description="Basic and acidic residues" evidence="4">
    <location>
        <begin position="99"/>
        <end position="108"/>
    </location>
</feature>
<feature type="compositionally biased region" description="Basic residues" evidence="4">
    <location>
        <begin position="112"/>
        <end position="121"/>
    </location>
</feature>
<feature type="non-terminal residue">
    <location>
        <position position="1"/>
    </location>
</feature>
<feature type="non-terminal residue">
    <location>
        <position position="121"/>
    </location>
</feature>
<sequence>VGVFLLSYSVPSCGRSVEELGRRLKRAVSEHQLLHDKGKSIQDLRRRFFLHHLIAEIHTAEIRATSEVSPNSKPAPNTKNHPVRFGSDDEGKYLTQETNKVETYKEQPLKTPGKKKKGKPG</sequence>
<protein>
    <recommendedName>
        <fullName>Parathyroid hormone-related protein</fullName>
        <shortName>PTH-rP</shortName>
        <shortName>PTHrP</shortName>
    </recommendedName>
</protein>
<name>PTHR_SHEEP</name>
<accession>Q9GK30</accession>
<dbReference type="EMBL" id="AF327654">
    <property type="protein sequence ID" value="AAG48348.1"/>
    <property type="molecule type" value="mRNA"/>
</dbReference>
<dbReference type="SMR" id="Q9GK30"/>
<dbReference type="MINT" id="Q9GK30"/>
<dbReference type="STRING" id="9940.ENSOARP00000021119"/>
<dbReference type="PaxDb" id="9940-ENSOARP00000021119"/>
<dbReference type="eggNOG" id="ENOG502S3J9">
    <property type="taxonomic scope" value="Eukaryota"/>
</dbReference>
<dbReference type="Proteomes" id="UP000002356">
    <property type="component" value="Unplaced"/>
</dbReference>
<dbReference type="GO" id="GO:0005737">
    <property type="term" value="C:cytoplasm"/>
    <property type="evidence" value="ECO:0007669"/>
    <property type="project" value="UniProtKB-SubCell"/>
</dbReference>
<dbReference type="GO" id="GO:0005576">
    <property type="term" value="C:extracellular region"/>
    <property type="evidence" value="ECO:0007669"/>
    <property type="project" value="UniProtKB-SubCell"/>
</dbReference>
<dbReference type="GO" id="GO:0005634">
    <property type="term" value="C:nucleus"/>
    <property type="evidence" value="ECO:0007669"/>
    <property type="project" value="UniProtKB-SubCell"/>
</dbReference>
<dbReference type="GO" id="GO:0005179">
    <property type="term" value="F:hormone activity"/>
    <property type="evidence" value="ECO:0007669"/>
    <property type="project" value="UniProtKB-KW"/>
</dbReference>
<dbReference type="GO" id="GO:0051428">
    <property type="term" value="F:peptide hormone receptor binding"/>
    <property type="evidence" value="ECO:0000250"/>
    <property type="project" value="UniProtKB"/>
</dbReference>
<dbReference type="GO" id="GO:0030282">
    <property type="term" value="P:bone mineralization"/>
    <property type="evidence" value="ECO:0007669"/>
    <property type="project" value="InterPro"/>
</dbReference>
<dbReference type="InterPro" id="IPR003626">
    <property type="entry name" value="PTH-rel"/>
</dbReference>
<dbReference type="InterPro" id="IPR001415">
    <property type="entry name" value="PTH/PTH-rel"/>
</dbReference>
<dbReference type="PANTHER" id="PTHR17223">
    <property type="entry name" value="PARATHYROID HORMONE-RELATED"/>
    <property type="match status" value="1"/>
</dbReference>
<dbReference type="PANTHER" id="PTHR17223:SF0">
    <property type="entry name" value="PARATHYROID HORMONE-RELATED PROTEIN"/>
    <property type="match status" value="1"/>
</dbReference>
<dbReference type="Pfam" id="PF01279">
    <property type="entry name" value="Parathyroid"/>
    <property type="match status" value="1"/>
</dbReference>
<dbReference type="SMART" id="SM00087">
    <property type="entry name" value="PTH"/>
    <property type="match status" value="1"/>
</dbReference>
<dbReference type="PROSITE" id="PS00335">
    <property type="entry name" value="PARATHYROID"/>
    <property type="match status" value="1"/>
</dbReference>
<proteinExistence type="evidence at transcript level"/>
<reference key="1">
    <citation type="submission" date="2000-12" db="EMBL/GenBank/DDBJ databases">
        <title>Expression of mRNA encoding parathyroid hormone-related peptide (PTH-rP) in ovine ovarian follicles.</title>
        <authorList>
            <person name="Hastie P.M."/>
            <person name="Beck N.F.G."/>
        </authorList>
    </citation>
    <scope>NUCLEOTIDE SEQUENCE [MRNA]</scope>
    <source>
        <tissue>Ovary</tissue>
    </source>
</reference>